<feature type="signal peptide" evidence="1">
    <location>
        <begin position="1"/>
        <end position="22"/>
    </location>
</feature>
<feature type="propeptide" id="PRO_0000412997">
    <location>
        <begin position="23"/>
        <end position="39"/>
    </location>
</feature>
<feature type="peptide" id="PRO_0000043820" description="Palustrin-1c">
    <location>
        <begin position="42"/>
        <end position="68"/>
    </location>
</feature>
<feature type="disulfide bond" evidence="2">
    <location>
        <begin position="62"/>
        <end position="68"/>
    </location>
</feature>
<accession>P84276</accession>
<accession>A7WNV8</accession>
<organism>
    <name type="scientific">Lithobates palustris</name>
    <name type="common">Pickerel frog</name>
    <name type="synonym">Rana palustris</name>
    <dbReference type="NCBI Taxonomy" id="298395"/>
    <lineage>
        <taxon>Eukaryota</taxon>
        <taxon>Metazoa</taxon>
        <taxon>Chordata</taxon>
        <taxon>Craniata</taxon>
        <taxon>Vertebrata</taxon>
        <taxon>Euteleostomi</taxon>
        <taxon>Amphibia</taxon>
        <taxon>Batrachia</taxon>
        <taxon>Anura</taxon>
        <taxon>Neobatrachia</taxon>
        <taxon>Ranoidea</taxon>
        <taxon>Ranidae</taxon>
        <taxon>Lithobates</taxon>
    </lineage>
</organism>
<dbReference type="EMBL" id="AM745092">
    <property type="protein sequence ID" value="CAN87014.1"/>
    <property type="molecule type" value="mRNA"/>
</dbReference>
<dbReference type="GO" id="GO:0005576">
    <property type="term" value="C:extracellular region"/>
    <property type="evidence" value="ECO:0000314"/>
    <property type="project" value="UniProtKB"/>
</dbReference>
<dbReference type="GO" id="GO:0050829">
    <property type="term" value="P:defense response to Gram-negative bacterium"/>
    <property type="evidence" value="ECO:0000314"/>
    <property type="project" value="UniProtKB"/>
</dbReference>
<dbReference type="GO" id="GO:0050796">
    <property type="term" value="P:regulation of insulin secretion"/>
    <property type="evidence" value="ECO:0000314"/>
    <property type="project" value="UniProtKB"/>
</dbReference>
<dbReference type="InterPro" id="IPR012521">
    <property type="entry name" value="Antimicrobial_frog_2"/>
</dbReference>
<dbReference type="InterPro" id="IPR004275">
    <property type="entry name" value="Frog_antimicrobial_propeptide"/>
</dbReference>
<dbReference type="Pfam" id="PF08023">
    <property type="entry name" value="Antimicrobial_2"/>
    <property type="match status" value="1"/>
</dbReference>
<dbReference type="Pfam" id="PF03032">
    <property type="entry name" value="FSAP_sig_propep"/>
    <property type="match status" value="1"/>
</dbReference>
<proteinExistence type="evidence at protein level"/>
<protein>
    <recommendedName>
        <fullName>Palustrin-1c</fullName>
    </recommendedName>
</protein>
<comment type="function">
    <text evidence="2 3">Antimicrobial activity against Gram-negative bacterium E.coli. Stimulates insulin release.</text>
</comment>
<comment type="subcellular location">
    <subcellularLocation>
        <location evidence="2 3">Secreted</location>
    </subcellularLocation>
</comment>
<comment type="tissue specificity">
    <text evidence="2 3">Expressed by the skin glands.</text>
</comment>
<comment type="mass spectrometry" mass="2873.6" error="0.6" method="Electrospray" evidence="2"/>
<comment type="mass spectrometry" mass="2873.5" method="MALDI" evidence="3"/>
<comment type="similarity">
    <text evidence="2 3">Belongs to the frog skin active peptide (FSAP) family. Brevinin subfamily.</text>
</comment>
<name>PA1C_LITPA</name>
<evidence type="ECO:0000255" key="1"/>
<evidence type="ECO:0000269" key="2">
    <source>
    </source>
</evidence>
<evidence type="ECO:0000269" key="3">
    <source>
    </source>
</evidence>
<evidence type="ECO:0000305" key="4"/>
<sequence length="68" mass="7494">MFTTKKSLLLLFFLGTISLSLCEEERGADEEEGDGEKLTKRALSILRGLEKLAKMGIALTNCKATKKC</sequence>
<reference key="1">
    <citation type="journal article" date="2007" name="Peptides">
        <title>Rapid identification of precursor cDNAs encoding five structural classes of antimicrobial peptides from pickerel frog (Rana palustris) skin secretion by single step 'shotgun' cloning.</title>
        <authorList>
            <person name="Zhou M."/>
            <person name="Wang L."/>
            <person name="Owens D.E."/>
            <person name="Chen T."/>
            <person name="Walker B."/>
            <person name="Shaw C."/>
        </authorList>
    </citation>
    <scope>NUCLEOTIDE SEQUENCE [MRNA]</scope>
    <source>
        <tissue>Skin secretion</tissue>
    </source>
</reference>
<reference evidence="4" key="2">
    <citation type="journal article" date="2000" name="Biochim. Biophys. Acta">
        <title>Multiple antimicrobial peptides and peptides related to bradykinin and neuromedin N isolated from skin secretions of the pickerel frog, Rana palustris.</title>
        <authorList>
            <person name="Basir Y.J."/>
            <person name="Knoop F.C."/>
            <person name="Dulka J."/>
            <person name="Conlon J.M."/>
        </authorList>
    </citation>
    <scope>PROTEIN SEQUENCE OF 42-68</scope>
    <scope>FUNCTION</scope>
    <scope>SUBCELLULAR LOCATION</scope>
    <scope>TISSUE SPECIFICITY</scope>
    <scope>MASS SPECTROMETRY</scope>
    <scope>DISULFIDE BOND</scope>
    <source>
        <tissue evidence="2">Skin secretion</tissue>
    </source>
</reference>
<reference evidence="4" key="3">
    <citation type="journal article" date="2004" name="J. Endocrinol.">
        <title>Brevinin-1 and multiple insulin-releasing peptides in the skin of the frog Rana palustris.</title>
        <authorList>
            <person name="Marenah L."/>
            <person name="Flatt P.R."/>
            <person name="Orr D.F."/>
            <person name="McClean S."/>
            <person name="Shaw C."/>
            <person name="Abdel-Wahab Y.H.A."/>
        </authorList>
    </citation>
    <scope>PROTEIN SEQUENCE OF 42-68</scope>
    <scope>FUNCTION</scope>
    <scope>SUBCELLULAR LOCATION</scope>
    <scope>TISSUE SPECIFICITY</scope>
    <scope>MASS SPECTROMETRY</scope>
    <source>
        <tissue evidence="3">Skin secretion</tissue>
    </source>
</reference>
<keyword id="KW-0878">Amphibian defense peptide</keyword>
<keyword id="KW-0044">Antibiotic</keyword>
<keyword id="KW-0929">Antimicrobial</keyword>
<keyword id="KW-0165">Cleavage on pair of basic residues</keyword>
<keyword id="KW-0903">Direct protein sequencing</keyword>
<keyword id="KW-1015">Disulfide bond</keyword>
<keyword id="KW-0964">Secreted</keyword>
<keyword id="KW-0732">Signal</keyword>